<gene>
    <name evidence="1" type="primary">tusC</name>
    <name type="ordered locus">ECIAI1_3480</name>
</gene>
<accession>B7M1P5</accession>
<proteinExistence type="inferred from homology"/>
<evidence type="ECO:0000255" key="1">
    <source>
        <dbReference type="HAMAP-Rule" id="MF_00389"/>
    </source>
</evidence>
<name>TUSC_ECO8A</name>
<sequence>MKRIAFVFSTAPHGTAAGREGLDALLATSALTDDLTVFFIADGVFQLLSGQKPDAVLARDYIATFKLLGLYDIEQCWVCAASLRERGLDPQTPFVVEATPLEADALRRELANYDVILRF</sequence>
<feature type="chain" id="PRO_1000122837" description="Protein TusC">
    <location>
        <begin position="1"/>
        <end position="119"/>
    </location>
</feature>
<protein>
    <recommendedName>
        <fullName evidence="1">Protein TusC</fullName>
    </recommendedName>
    <alternativeName>
        <fullName evidence="1">tRNA 2-thiouridine synthesizing protein C</fullName>
    </alternativeName>
</protein>
<keyword id="KW-0963">Cytoplasm</keyword>
<keyword id="KW-0819">tRNA processing</keyword>
<reference key="1">
    <citation type="journal article" date="2009" name="PLoS Genet.">
        <title>Organised genome dynamics in the Escherichia coli species results in highly diverse adaptive paths.</title>
        <authorList>
            <person name="Touchon M."/>
            <person name="Hoede C."/>
            <person name="Tenaillon O."/>
            <person name="Barbe V."/>
            <person name="Baeriswyl S."/>
            <person name="Bidet P."/>
            <person name="Bingen E."/>
            <person name="Bonacorsi S."/>
            <person name="Bouchier C."/>
            <person name="Bouvet O."/>
            <person name="Calteau A."/>
            <person name="Chiapello H."/>
            <person name="Clermont O."/>
            <person name="Cruveiller S."/>
            <person name="Danchin A."/>
            <person name="Diard M."/>
            <person name="Dossat C."/>
            <person name="Karoui M.E."/>
            <person name="Frapy E."/>
            <person name="Garry L."/>
            <person name="Ghigo J.M."/>
            <person name="Gilles A.M."/>
            <person name="Johnson J."/>
            <person name="Le Bouguenec C."/>
            <person name="Lescat M."/>
            <person name="Mangenot S."/>
            <person name="Martinez-Jehanne V."/>
            <person name="Matic I."/>
            <person name="Nassif X."/>
            <person name="Oztas S."/>
            <person name="Petit M.A."/>
            <person name="Pichon C."/>
            <person name="Rouy Z."/>
            <person name="Ruf C.S."/>
            <person name="Schneider D."/>
            <person name="Tourret J."/>
            <person name="Vacherie B."/>
            <person name="Vallenet D."/>
            <person name="Medigue C."/>
            <person name="Rocha E.P.C."/>
            <person name="Denamur E."/>
        </authorList>
    </citation>
    <scope>NUCLEOTIDE SEQUENCE [LARGE SCALE GENOMIC DNA]</scope>
    <source>
        <strain>IAI1</strain>
    </source>
</reference>
<comment type="function">
    <text evidence="1">Part of a sulfur-relay system required for 2-thiolation of 5-methylaminomethyl-2-thiouridine (mnm(5)s(2)U) at tRNA wobble positions.</text>
</comment>
<comment type="subunit">
    <text evidence="1">Heterohexamer, formed by a dimer of trimers. The hexameric TusBCD complex contains 2 copies each of TusB, TusC and TusD. The TusBCD complex interacts with TusE.</text>
</comment>
<comment type="subcellular location">
    <subcellularLocation>
        <location evidence="1">Cytoplasm</location>
    </subcellularLocation>
</comment>
<comment type="similarity">
    <text evidence="1">Belongs to the DsrF/TusC family.</text>
</comment>
<organism>
    <name type="scientific">Escherichia coli O8 (strain IAI1)</name>
    <dbReference type="NCBI Taxonomy" id="585034"/>
    <lineage>
        <taxon>Bacteria</taxon>
        <taxon>Pseudomonadati</taxon>
        <taxon>Pseudomonadota</taxon>
        <taxon>Gammaproteobacteria</taxon>
        <taxon>Enterobacterales</taxon>
        <taxon>Enterobacteriaceae</taxon>
        <taxon>Escherichia</taxon>
    </lineage>
</organism>
<dbReference type="EMBL" id="CU928160">
    <property type="protein sequence ID" value="CAR00282.1"/>
    <property type="molecule type" value="Genomic_DNA"/>
</dbReference>
<dbReference type="RefSeq" id="WP_000820724.1">
    <property type="nucleotide sequence ID" value="NC_011741.1"/>
</dbReference>
<dbReference type="SMR" id="B7M1P5"/>
<dbReference type="KEGG" id="ecr:ECIAI1_3480"/>
<dbReference type="HOGENOM" id="CLU_155943_1_0_6"/>
<dbReference type="GO" id="GO:0005737">
    <property type="term" value="C:cytoplasm"/>
    <property type="evidence" value="ECO:0007669"/>
    <property type="project" value="UniProtKB-SubCell"/>
</dbReference>
<dbReference type="GO" id="GO:0008033">
    <property type="term" value="P:tRNA processing"/>
    <property type="evidence" value="ECO:0007669"/>
    <property type="project" value="UniProtKB-UniRule"/>
</dbReference>
<dbReference type="FunFam" id="3.40.1260.10:FF:000004">
    <property type="entry name" value="Sulfurtransferase TusC"/>
    <property type="match status" value="1"/>
</dbReference>
<dbReference type="Gene3D" id="3.40.1260.10">
    <property type="entry name" value="DsrEFH-like"/>
    <property type="match status" value="1"/>
</dbReference>
<dbReference type="HAMAP" id="MF_00389">
    <property type="entry name" value="Thiourid_synth_C"/>
    <property type="match status" value="1"/>
</dbReference>
<dbReference type="InterPro" id="IPR027396">
    <property type="entry name" value="DsrEFH-like"/>
</dbReference>
<dbReference type="InterPro" id="IPR003787">
    <property type="entry name" value="Sulphur_relay_DsrE/F-like"/>
</dbReference>
<dbReference type="InterPro" id="IPR037450">
    <property type="entry name" value="Sulphur_relay_TusC"/>
</dbReference>
<dbReference type="InterPro" id="IPR017462">
    <property type="entry name" value="Sulphur_relay_TusC/DsrF"/>
</dbReference>
<dbReference type="NCBIfam" id="NF001238">
    <property type="entry name" value="PRK00211.1"/>
    <property type="match status" value="1"/>
</dbReference>
<dbReference type="NCBIfam" id="TIGR03010">
    <property type="entry name" value="sulf_tusC_dsrF"/>
    <property type="match status" value="1"/>
</dbReference>
<dbReference type="PANTHER" id="PTHR38780">
    <property type="entry name" value="PROTEIN TUSC"/>
    <property type="match status" value="1"/>
</dbReference>
<dbReference type="PANTHER" id="PTHR38780:SF1">
    <property type="entry name" value="PROTEIN TUSC"/>
    <property type="match status" value="1"/>
</dbReference>
<dbReference type="Pfam" id="PF02635">
    <property type="entry name" value="DsrE"/>
    <property type="match status" value="1"/>
</dbReference>
<dbReference type="SUPFAM" id="SSF75169">
    <property type="entry name" value="DsrEFH-like"/>
    <property type="match status" value="1"/>
</dbReference>